<dbReference type="EMBL" id="CR382128">
    <property type="protein sequence ID" value="CAG82832.1"/>
    <property type="molecule type" value="Genomic_DNA"/>
</dbReference>
<dbReference type="RefSeq" id="XP_500599.1">
    <property type="nucleotide sequence ID" value="XM_500599.1"/>
</dbReference>
<dbReference type="FunCoup" id="Q6CFG3">
    <property type="interactions" value="14"/>
</dbReference>
<dbReference type="EnsemblFungi" id="CAG82832">
    <property type="protein sequence ID" value="CAG82832"/>
    <property type="gene ID" value="YALI0_B07249g"/>
</dbReference>
<dbReference type="KEGG" id="yli:2907381"/>
<dbReference type="VEuPathDB" id="FungiDB:YALI0_B07249g"/>
<dbReference type="HOGENOM" id="CLU_142363_1_0_1"/>
<dbReference type="InParanoid" id="Q6CFG3"/>
<dbReference type="OMA" id="VEESWHN"/>
<dbReference type="OrthoDB" id="106962at4891"/>
<dbReference type="Proteomes" id="UP000001300">
    <property type="component" value="Chromosome B"/>
</dbReference>
<dbReference type="CDD" id="cd23996">
    <property type="entry name" value="LCL2-like"/>
    <property type="match status" value="1"/>
</dbReference>
<dbReference type="InterPro" id="IPR034543">
    <property type="entry name" value="LCL2"/>
</dbReference>
<dbReference type="PANTHER" id="PTHR38425">
    <property type="entry name" value="LONG CHRONOLOGICAL LIFESPAN PROTEIN 2"/>
    <property type="match status" value="1"/>
</dbReference>
<dbReference type="PANTHER" id="PTHR38425:SF1">
    <property type="entry name" value="LONG CHRONOLOGICAL LIFESPAN PROTEIN 2"/>
    <property type="match status" value="1"/>
</dbReference>
<comment type="function">
    <text evidence="1">Probable component of the endoplasmic reticulum-associated degradation (ERAD) pathway.</text>
</comment>
<comment type="similarity">
    <text evidence="3">Belongs to the LCL2 family.</text>
</comment>
<proteinExistence type="inferred from homology"/>
<feature type="signal peptide" evidence="2">
    <location>
        <begin position="1"/>
        <end position="15"/>
    </location>
</feature>
<feature type="chain" id="PRO_0000408632" description="Long chronological lifespan protein 2">
    <location>
        <begin position="16"/>
        <end position="121"/>
    </location>
</feature>
<keyword id="KW-1185">Reference proteome</keyword>
<keyword id="KW-0732">Signal</keyword>
<reference key="1">
    <citation type="journal article" date="2004" name="Nature">
        <title>Genome evolution in yeasts.</title>
        <authorList>
            <person name="Dujon B."/>
            <person name="Sherman D."/>
            <person name="Fischer G."/>
            <person name="Durrens P."/>
            <person name="Casaregola S."/>
            <person name="Lafontaine I."/>
            <person name="de Montigny J."/>
            <person name="Marck C."/>
            <person name="Neuveglise C."/>
            <person name="Talla E."/>
            <person name="Goffard N."/>
            <person name="Frangeul L."/>
            <person name="Aigle M."/>
            <person name="Anthouard V."/>
            <person name="Babour A."/>
            <person name="Barbe V."/>
            <person name="Barnay S."/>
            <person name="Blanchin S."/>
            <person name="Beckerich J.-M."/>
            <person name="Beyne E."/>
            <person name="Bleykasten C."/>
            <person name="Boisrame A."/>
            <person name="Boyer J."/>
            <person name="Cattolico L."/>
            <person name="Confanioleri F."/>
            <person name="de Daruvar A."/>
            <person name="Despons L."/>
            <person name="Fabre E."/>
            <person name="Fairhead C."/>
            <person name="Ferry-Dumazet H."/>
            <person name="Groppi A."/>
            <person name="Hantraye F."/>
            <person name="Hennequin C."/>
            <person name="Jauniaux N."/>
            <person name="Joyet P."/>
            <person name="Kachouri R."/>
            <person name="Kerrest A."/>
            <person name="Koszul R."/>
            <person name="Lemaire M."/>
            <person name="Lesur I."/>
            <person name="Ma L."/>
            <person name="Muller H."/>
            <person name="Nicaud J.-M."/>
            <person name="Nikolski M."/>
            <person name="Oztas S."/>
            <person name="Ozier-Kalogeropoulos O."/>
            <person name="Pellenz S."/>
            <person name="Potier S."/>
            <person name="Richard G.-F."/>
            <person name="Straub M.-L."/>
            <person name="Suleau A."/>
            <person name="Swennen D."/>
            <person name="Tekaia F."/>
            <person name="Wesolowski-Louvel M."/>
            <person name="Westhof E."/>
            <person name="Wirth B."/>
            <person name="Zeniou-Meyer M."/>
            <person name="Zivanovic Y."/>
            <person name="Bolotin-Fukuhara M."/>
            <person name="Thierry A."/>
            <person name="Bouchier C."/>
            <person name="Caudron B."/>
            <person name="Scarpelli C."/>
            <person name="Gaillardin C."/>
            <person name="Weissenbach J."/>
            <person name="Wincker P."/>
            <person name="Souciet J.-L."/>
        </authorList>
    </citation>
    <scope>NUCLEOTIDE SEQUENCE [LARGE SCALE GENOMIC DNA]</scope>
    <source>
        <strain>CLIB 122 / E 150</strain>
    </source>
</reference>
<protein>
    <recommendedName>
        <fullName>Long chronological lifespan protein 2</fullName>
    </recommendedName>
</protein>
<name>LCL2_YARLI</name>
<gene>
    <name type="primary">LCL2</name>
    <name type="ordered locus">YALI0B07249g</name>
</gene>
<accession>Q6CFG3</accession>
<organism>
    <name type="scientific">Yarrowia lipolytica (strain CLIB 122 / E 150)</name>
    <name type="common">Yeast</name>
    <name type="synonym">Candida lipolytica</name>
    <dbReference type="NCBI Taxonomy" id="284591"/>
    <lineage>
        <taxon>Eukaryota</taxon>
        <taxon>Fungi</taxon>
        <taxon>Dikarya</taxon>
        <taxon>Ascomycota</taxon>
        <taxon>Saccharomycotina</taxon>
        <taxon>Dipodascomycetes</taxon>
        <taxon>Dipodascales</taxon>
        <taxon>Dipodascales incertae sedis</taxon>
        <taxon>Yarrowia</taxon>
    </lineage>
</organism>
<evidence type="ECO:0000250" key="1"/>
<evidence type="ECO:0000255" key="2"/>
<evidence type="ECO:0000305" key="3"/>
<sequence length="121" mass="13356">MRPTVILTCAAAAHAQIFGNFFNQMLKKEFAVEESWHNQEYHKVSCDNGHVCPDTLTCVNSPLECPCQFPASEIKCVYPDKSGYVCISKPGDGYDGSDASSKAEDGKRDCAWVNKAFRGEL</sequence>